<comment type="subcellular location">
    <subcellularLocation>
        <location evidence="3">Cell membrane</location>
        <topology evidence="3">Multi-pass membrane protein</topology>
    </subcellularLocation>
</comment>
<proteinExistence type="predicted"/>
<accession>O83602</accession>
<sequence>MHDARTFFMRGSCTYAHPVAIGRFFPLSSPTHTPQGTLMKSHGTMCSRNALLLPRRGAGLHVLTPRIREARPVNTGVKVILSLFATLVLMVGVFFCAPRASFAEFERHFYQPTVLSALSTNLREVSKASEAWHSRYRPLFSQFCALDAVRSSFDPAQKAEDITQRAREASALLSSVAGLKGVRIVEAQKPNIHFSTFESDVLLADSGSVTYRKYNAEEHDVPLQFLGEHSPEPKVIIDEYHDALLYSFPSLGNYGEYRGRILFYLSLRALGTHLIAENKLKITDSIVPLSADDYTFGGIVIGIPHEGVRSLKPSVLAEWKRKQFRVQTVRSEQHEDWALLSNASGAFVIAQAVPVLLFGFTPLTKGLVAMVAVVTTFLLVFQLLSLRQDPLTKLRDRLIHFHAQLLHSCLEQKESLEWEEVRTRLEHRRRETDAEMKKSLPRRLRIRRGRELDALLSKGWDDVFSTLEHGYGGARAMNRAQIEQLVREVLAQSLASGEAVLPVAMRADTADEELDEVLEELPDEAASLPSDSSPEEDLDPLEEVESIEGTAEESTREYAAAGDALLSKTPQLSTHSEYVPATLAELLGRNAEPGDVVRDSAVLEYIEGVFDYRPCCFYESHAVHDCLEVVTGEDGPSLSPMESIVSTEDGLFTIRVSKEEGNHLNRDFKALVDSVLY</sequence>
<name>Y593_TREPA</name>
<evidence type="ECO:0000255" key="1"/>
<evidence type="ECO:0000256" key="2">
    <source>
        <dbReference type="SAM" id="MobiDB-lite"/>
    </source>
</evidence>
<evidence type="ECO:0000305" key="3"/>
<gene>
    <name type="ordered locus">TP_0593</name>
</gene>
<feature type="chain" id="PRO_0000202282" description="Uncharacterized protein TP_0593">
    <location>
        <begin position="1"/>
        <end position="677"/>
    </location>
</feature>
<feature type="transmembrane region" description="Helical" evidence="1">
    <location>
        <begin position="80"/>
        <end position="102"/>
    </location>
</feature>
<feature type="transmembrane region" description="Helical" evidence="1">
    <location>
        <begin position="338"/>
        <end position="360"/>
    </location>
</feature>
<feature type="transmembrane region" description="Helical" evidence="1">
    <location>
        <begin position="367"/>
        <end position="386"/>
    </location>
</feature>
<feature type="region of interest" description="Disordered" evidence="2">
    <location>
        <begin position="523"/>
        <end position="556"/>
    </location>
</feature>
<feature type="compositionally biased region" description="Acidic residues" evidence="2">
    <location>
        <begin position="533"/>
        <end position="546"/>
    </location>
</feature>
<protein>
    <recommendedName>
        <fullName>Uncharacterized protein TP_0593</fullName>
    </recommendedName>
</protein>
<dbReference type="EMBL" id="AE000520">
    <property type="protein sequence ID" value="AAC65571.1"/>
    <property type="molecule type" value="Genomic_DNA"/>
</dbReference>
<dbReference type="PIR" id="B71306">
    <property type="entry name" value="B71306"/>
</dbReference>
<dbReference type="IntAct" id="O83602">
    <property type="interactions" value="7"/>
</dbReference>
<dbReference type="STRING" id="243276.TP_0593"/>
<dbReference type="EnsemblBacteria" id="AAC65571">
    <property type="protein sequence ID" value="AAC65571"/>
    <property type="gene ID" value="TP_0593"/>
</dbReference>
<dbReference type="KEGG" id="tpa:TP_0593"/>
<dbReference type="KEGG" id="tpw:TPANIC_0593"/>
<dbReference type="eggNOG" id="COG3064">
    <property type="taxonomic scope" value="Bacteria"/>
</dbReference>
<dbReference type="HOGENOM" id="CLU_464544_0_0_12"/>
<dbReference type="OrthoDB" id="363256at2"/>
<dbReference type="Proteomes" id="UP000000811">
    <property type="component" value="Chromosome"/>
</dbReference>
<dbReference type="GO" id="GO:0005886">
    <property type="term" value="C:plasma membrane"/>
    <property type="evidence" value="ECO:0007669"/>
    <property type="project" value="UniProtKB-SubCell"/>
</dbReference>
<reference key="1">
    <citation type="journal article" date="1998" name="Science">
        <title>Complete genome sequence of Treponema pallidum, the syphilis spirochete.</title>
        <authorList>
            <person name="Fraser C.M."/>
            <person name="Norris S.J."/>
            <person name="Weinstock G.M."/>
            <person name="White O."/>
            <person name="Sutton G.G."/>
            <person name="Dodson R.J."/>
            <person name="Gwinn M.L."/>
            <person name="Hickey E.K."/>
            <person name="Clayton R.A."/>
            <person name="Ketchum K.A."/>
            <person name="Sodergren E."/>
            <person name="Hardham J.M."/>
            <person name="McLeod M.P."/>
            <person name="Salzberg S.L."/>
            <person name="Peterson J.D."/>
            <person name="Khalak H.G."/>
            <person name="Richardson D.L."/>
            <person name="Howell J.K."/>
            <person name="Chidambaram M."/>
            <person name="Utterback T.R."/>
            <person name="McDonald L.A."/>
            <person name="Artiach P."/>
            <person name="Bowman C."/>
            <person name="Cotton M.D."/>
            <person name="Fujii C."/>
            <person name="Garland S.A."/>
            <person name="Hatch B."/>
            <person name="Horst K."/>
            <person name="Roberts K.M."/>
            <person name="Sandusky M."/>
            <person name="Weidman J.F."/>
            <person name="Smith H.O."/>
            <person name="Venter J.C."/>
        </authorList>
    </citation>
    <scope>NUCLEOTIDE SEQUENCE [LARGE SCALE GENOMIC DNA]</scope>
    <source>
        <strain>Nichols</strain>
    </source>
</reference>
<organism>
    <name type="scientific">Treponema pallidum (strain Nichols)</name>
    <dbReference type="NCBI Taxonomy" id="243276"/>
    <lineage>
        <taxon>Bacteria</taxon>
        <taxon>Pseudomonadati</taxon>
        <taxon>Spirochaetota</taxon>
        <taxon>Spirochaetia</taxon>
        <taxon>Spirochaetales</taxon>
        <taxon>Treponemataceae</taxon>
        <taxon>Treponema</taxon>
    </lineage>
</organism>
<keyword id="KW-1003">Cell membrane</keyword>
<keyword id="KW-0472">Membrane</keyword>
<keyword id="KW-1185">Reference proteome</keyword>
<keyword id="KW-0812">Transmembrane</keyword>
<keyword id="KW-1133">Transmembrane helix</keyword>